<sequence>MAESLICNSTQSRVSSVLNRDVKQFGKKFMFDSNEETCWNSDQGESQWVLLEFPQHVKVSEVRLQFQGGFSGKSCKLEGSSKDENLRHILNFYPEDNNSLQSFPIPDAPLVQKLKIVFENSTDFFGRIIVYTLDILGEKDL</sequence>
<protein>
    <recommendedName>
        <fullName>Nuclear receptor 2C2-associated protein</fullName>
    </recommendedName>
    <alternativeName>
        <fullName>TR4 orphan receptor-associated 16 kDa protein homolog</fullName>
    </alternativeName>
</protein>
<feature type="chain" id="PRO_0000295587" description="Nuclear receptor 2C2-associated protein">
    <location>
        <begin position="1"/>
        <end position="141"/>
    </location>
</feature>
<feature type="sequence conflict" description="In Ref. 1; CAM56300." evidence="2" ref="1">
    <original>S</original>
    <variation>I</variation>
    <location>
        <position position="102"/>
    </location>
</feature>
<dbReference type="EMBL" id="BX649643">
    <property type="protein sequence ID" value="CAM56300.1"/>
    <property type="status" value="ALT_INIT"/>
    <property type="molecule type" value="Genomic_DNA"/>
</dbReference>
<dbReference type="EMBL" id="BC095749">
    <property type="protein sequence ID" value="AAH95749.1"/>
    <property type="molecule type" value="mRNA"/>
</dbReference>
<dbReference type="EMBL" id="BC117584">
    <property type="protein sequence ID" value="AAI17585.1"/>
    <property type="molecule type" value="mRNA"/>
</dbReference>
<dbReference type="RefSeq" id="NP_001038792.1">
    <property type="nucleotide sequence ID" value="NM_001045327.2"/>
</dbReference>
<dbReference type="SMR" id="Q1ED21"/>
<dbReference type="FunCoup" id="Q1ED21">
    <property type="interactions" value="238"/>
</dbReference>
<dbReference type="STRING" id="7955.ENSDARP00000115972"/>
<dbReference type="PaxDb" id="7955-ENSDARP00000115972"/>
<dbReference type="GeneID" id="724051"/>
<dbReference type="KEGG" id="dre:724051"/>
<dbReference type="AGR" id="ZFIN:ZDB-GENE-050208-758"/>
<dbReference type="CTD" id="126382"/>
<dbReference type="ZFIN" id="ZDB-GENE-050208-758">
    <property type="gene designation" value="nr2c2ap"/>
</dbReference>
<dbReference type="eggNOG" id="ENOG502RZAY">
    <property type="taxonomic scope" value="Eukaryota"/>
</dbReference>
<dbReference type="InParanoid" id="Q1ED21"/>
<dbReference type="OrthoDB" id="10052260at2759"/>
<dbReference type="PhylomeDB" id="Q1ED21"/>
<dbReference type="PRO" id="PR:Q1ED21"/>
<dbReference type="Proteomes" id="UP000000437">
    <property type="component" value="Chromosome 22"/>
</dbReference>
<dbReference type="GO" id="GO:0005634">
    <property type="term" value="C:nucleus"/>
    <property type="evidence" value="ECO:0007669"/>
    <property type="project" value="UniProtKB-SubCell"/>
</dbReference>
<dbReference type="FunFam" id="2.60.120.260:FF:000070">
    <property type="entry name" value="Nuclear receptor 2C2-associated protein"/>
    <property type="match status" value="1"/>
</dbReference>
<dbReference type="Gene3D" id="2.60.120.260">
    <property type="entry name" value="Galactose-binding domain-like"/>
    <property type="match status" value="1"/>
</dbReference>
<dbReference type="InterPro" id="IPR008979">
    <property type="entry name" value="Galactose-bd-like_sf"/>
</dbReference>
<dbReference type="SUPFAM" id="SSF49785">
    <property type="entry name" value="Galactose-binding domain-like"/>
    <property type="match status" value="1"/>
</dbReference>
<reference key="1">
    <citation type="journal article" date="2013" name="Nature">
        <title>The zebrafish reference genome sequence and its relationship to the human genome.</title>
        <authorList>
            <person name="Howe K."/>
            <person name="Clark M.D."/>
            <person name="Torroja C.F."/>
            <person name="Torrance J."/>
            <person name="Berthelot C."/>
            <person name="Muffato M."/>
            <person name="Collins J.E."/>
            <person name="Humphray S."/>
            <person name="McLaren K."/>
            <person name="Matthews L."/>
            <person name="McLaren S."/>
            <person name="Sealy I."/>
            <person name="Caccamo M."/>
            <person name="Churcher C."/>
            <person name="Scott C."/>
            <person name="Barrett J.C."/>
            <person name="Koch R."/>
            <person name="Rauch G.J."/>
            <person name="White S."/>
            <person name="Chow W."/>
            <person name="Kilian B."/>
            <person name="Quintais L.T."/>
            <person name="Guerra-Assuncao J.A."/>
            <person name="Zhou Y."/>
            <person name="Gu Y."/>
            <person name="Yen J."/>
            <person name="Vogel J.H."/>
            <person name="Eyre T."/>
            <person name="Redmond S."/>
            <person name="Banerjee R."/>
            <person name="Chi J."/>
            <person name="Fu B."/>
            <person name="Langley E."/>
            <person name="Maguire S.F."/>
            <person name="Laird G.K."/>
            <person name="Lloyd D."/>
            <person name="Kenyon E."/>
            <person name="Donaldson S."/>
            <person name="Sehra H."/>
            <person name="Almeida-King J."/>
            <person name="Loveland J."/>
            <person name="Trevanion S."/>
            <person name="Jones M."/>
            <person name="Quail M."/>
            <person name="Willey D."/>
            <person name="Hunt A."/>
            <person name="Burton J."/>
            <person name="Sims S."/>
            <person name="McLay K."/>
            <person name="Plumb B."/>
            <person name="Davis J."/>
            <person name="Clee C."/>
            <person name="Oliver K."/>
            <person name="Clark R."/>
            <person name="Riddle C."/>
            <person name="Elliot D."/>
            <person name="Threadgold G."/>
            <person name="Harden G."/>
            <person name="Ware D."/>
            <person name="Begum S."/>
            <person name="Mortimore B."/>
            <person name="Kerry G."/>
            <person name="Heath P."/>
            <person name="Phillimore B."/>
            <person name="Tracey A."/>
            <person name="Corby N."/>
            <person name="Dunn M."/>
            <person name="Johnson C."/>
            <person name="Wood J."/>
            <person name="Clark S."/>
            <person name="Pelan S."/>
            <person name="Griffiths G."/>
            <person name="Smith M."/>
            <person name="Glithero R."/>
            <person name="Howden P."/>
            <person name="Barker N."/>
            <person name="Lloyd C."/>
            <person name="Stevens C."/>
            <person name="Harley J."/>
            <person name="Holt K."/>
            <person name="Panagiotidis G."/>
            <person name="Lovell J."/>
            <person name="Beasley H."/>
            <person name="Henderson C."/>
            <person name="Gordon D."/>
            <person name="Auger K."/>
            <person name="Wright D."/>
            <person name="Collins J."/>
            <person name="Raisen C."/>
            <person name="Dyer L."/>
            <person name="Leung K."/>
            <person name="Robertson L."/>
            <person name="Ambridge K."/>
            <person name="Leongamornlert D."/>
            <person name="McGuire S."/>
            <person name="Gilderthorp R."/>
            <person name="Griffiths C."/>
            <person name="Manthravadi D."/>
            <person name="Nichol S."/>
            <person name="Barker G."/>
            <person name="Whitehead S."/>
            <person name="Kay M."/>
            <person name="Brown J."/>
            <person name="Murnane C."/>
            <person name="Gray E."/>
            <person name="Humphries M."/>
            <person name="Sycamore N."/>
            <person name="Barker D."/>
            <person name="Saunders D."/>
            <person name="Wallis J."/>
            <person name="Babbage A."/>
            <person name="Hammond S."/>
            <person name="Mashreghi-Mohammadi M."/>
            <person name="Barr L."/>
            <person name="Martin S."/>
            <person name="Wray P."/>
            <person name="Ellington A."/>
            <person name="Matthews N."/>
            <person name="Ellwood M."/>
            <person name="Woodmansey R."/>
            <person name="Clark G."/>
            <person name="Cooper J."/>
            <person name="Tromans A."/>
            <person name="Grafham D."/>
            <person name="Skuce C."/>
            <person name="Pandian R."/>
            <person name="Andrews R."/>
            <person name="Harrison E."/>
            <person name="Kimberley A."/>
            <person name="Garnett J."/>
            <person name="Fosker N."/>
            <person name="Hall R."/>
            <person name="Garner P."/>
            <person name="Kelly D."/>
            <person name="Bird C."/>
            <person name="Palmer S."/>
            <person name="Gehring I."/>
            <person name="Berger A."/>
            <person name="Dooley C.M."/>
            <person name="Ersan-Urun Z."/>
            <person name="Eser C."/>
            <person name="Geiger H."/>
            <person name="Geisler M."/>
            <person name="Karotki L."/>
            <person name="Kirn A."/>
            <person name="Konantz J."/>
            <person name="Konantz M."/>
            <person name="Oberlander M."/>
            <person name="Rudolph-Geiger S."/>
            <person name="Teucke M."/>
            <person name="Lanz C."/>
            <person name="Raddatz G."/>
            <person name="Osoegawa K."/>
            <person name="Zhu B."/>
            <person name="Rapp A."/>
            <person name="Widaa S."/>
            <person name="Langford C."/>
            <person name="Yang F."/>
            <person name="Schuster S.C."/>
            <person name="Carter N.P."/>
            <person name="Harrow J."/>
            <person name="Ning Z."/>
            <person name="Herrero J."/>
            <person name="Searle S.M."/>
            <person name="Enright A."/>
            <person name="Geisler R."/>
            <person name="Plasterk R.H."/>
            <person name="Lee C."/>
            <person name="Westerfield M."/>
            <person name="de Jong P.J."/>
            <person name="Zon L.I."/>
            <person name="Postlethwait J.H."/>
            <person name="Nusslein-Volhard C."/>
            <person name="Hubbard T.J."/>
            <person name="Roest Crollius H."/>
            <person name="Rogers J."/>
            <person name="Stemple D.L."/>
        </authorList>
    </citation>
    <scope>NUCLEOTIDE SEQUENCE [LARGE SCALE GENOMIC DNA]</scope>
    <source>
        <strain>Tuebingen</strain>
    </source>
</reference>
<reference key="2">
    <citation type="submission" date="2006-06" db="EMBL/GenBank/DDBJ databases">
        <authorList>
            <consortium name="NIH - Zebrafish Gene Collection (ZGC) project"/>
        </authorList>
    </citation>
    <scope>NUCLEOTIDE SEQUENCE [LARGE SCALE MRNA]</scope>
</reference>
<proteinExistence type="evidence at transcript level"/>
<keyword id="KW-0539">Nucleus</keyword>
<keyword id="KW-1185">Reference proteome</keyword>
<accession>Q1ED21</accession>
<accession>A3KQI6</accession>
<accession>Q4VBI9</accession>
<evidence type="ECO:0000250" key="1"/>
<evidence type="ECO:0000305" key="2"/>
<gene>
    <name type="primary">nr2c2ap</name>
    <name type="synonym">tra16</name>
    <name type="ORF">ch211-125m10.4</name>
    <name type="ORF">zgc:136330</name>
</gene>
<name>NR2CA_DANRE</name>
<organism>
    <name type="scientific">Danio rerio</name>
    <name type="common">Zebrafish</name>
    <name type="synonym">Brachydanio rerio</name>
    <dbReference type="NCBI Taxonomy" id="7955"/>
    <lineage>
        <taxon>Eukaryota</taxon>
        <taxon>Metazoa</taxon>
        <taxon>Chordata</taxon>
        <taxon>Craniata</taxon>
        <taxon>Vertebrata</taxon>
        <taxon>Euteleostomi</taxon>
        <taxon>Actinopterygii</taxon>
        <taxon>Neopterygii</taxon>
        <taxon>Teleostei</taxon>
        <taxon>Ostariophysi</taxon>
        <taxon>Cypriniformes</taxon>
        <taxon>Danionidae</taxon>
        <taxon>Danioninae</taxon>
        <taxon>Danio</taxon>
    </lineage>
</organism>
<comment type="function">
    <text evidence="1">May act as a repressor of nr2c2-mediated transactivation by suppressing the binding between nr2c2 and its response element in target genes.</text>
</comment>
<comment type="subcellular location">
    <subcellularLocation>
        <location evidence="1">Nucleus</location>
    </subcellularLocation>
</comment>
<comment type="similarity">
    <text evidence="2">Belongs to the NR2C2AP family.</text>
</comment>
<comment type="sequence caution" evidence="2">
    <conflict type="erroneous initiation">
        <sequence resource="EMBL-CDS" id="CAM56300"/>
    </conflict>
</comment>